<gene>
    <name evidence="1" type="primary">fusA1</name>
    <name type="ordered locus">BURPS1710b_1105</name>
</gene>
<name>EFG1_BURP1</name>
<dbReference type="EMBL" id="CP000124">
    <property type="protein sequence ID" value="ABA48674.1"/>
    <property type="status" value="ALT_INIT"/>
    <property type="molecule type" value="Genomic_DNA"/>
</dbReference>
<dbReference type="SMR" id="Q3JV86"/>
<dbReference type="EnsemblBacteria" id="ABA48674">
    <property type="protein sequence ID" value="ABA48674"/>
    <property type="gene ID" value="BURPS1710b_1105"/>
</dbReference>
<dbReference type="KEGG" id="bpm:BURPS1710b_1105"/>
<dbReference type="HOGENOM" id="CLU_002794_4_1_4"/>
<dbReference type="Proteomes" id="UP000002700">
    <property type="component" value="Chromosome I"/>
</dbReference>
<dbReference type="GO" id="GO:0005737">
    <property type="term" value="C:cytoplasm"/>
    <property type="evidence" value="ECO:0007669"/>
    <property type="project" value="UniProtKB-SubCell"/>
</dbReference>
<dbReference type="GO" id="GO:0005525">
    <property type="term" value="F:GTP binding"/>
    <property type="evidence" value="ECO:0007669"/>
    <property type="project" value="UniProtKB-UniRule"/>
</dbReference>
<dbReference type="GO" id="GO:0003924">
    <property type="term" value="F:GTPase activity"/>
    <property type="evidence" value="ECO:0007669"/>
    <property type="project" value="InterPro"/>
</dbReference>
<dbReference type="GO" id="GO:0097216">
    <property type="term" value="F:guanosine tetraphosphate binding"/>
    <property type="evidence" value="ECO:0007669"/>
    <property type="project" value="UniProtKB-ARBA"/>
</dbReference>
<dbReference type="GO" id="GO:0003746">
    <property type="term" value="F:translation elongation factor activity"/>
    <property type="evidence" value="ECO:0007669"/>
    <property type="project" value="UniProtKB-UniRule"/>
</dbReference>
<dbReference type="GO" id="GO:0032790">
    <property type="term" value="P:ribosome disassembly"/>
    <property type="evidence" value="ECO:0007669"/>
    <property type="project" value="TreeGrafter"/>
</dbReference>
<dbReference type="CDD" id="cd01886">
    <property type="entry name" value="EF-G"/>
    <property type="match status" value="1"/>
</dbReference>
<dbReference type="CDD" id="cd16262">
    <property type="entry name" value="EFG_III"/>
    <property type="match status" value="1"/>
</dbReference>
<dbReference type="CDD" id="cd01434">
    <property type="entry name" value="EFG_mtEFG1_IV"/>
    <property type="match status" value="1"/>
</dbReference>
<dbReference type="CDD" id="cd03713">
    <property type="entry name" value="EFG_mtEFG_C"/>
    <property type="match status" value="1"/>
</dbReference>
<dbReference type="CDD" id="cd04088">
    <property type="entry name" value="EFG_mtEFG_II"/>
    <property type="match status" value="1"/>
</dbReference>
<dbReference type="FunFam" id="2.40.30.10:FF:000006">
    <property type="entry name" value="Elongation factor G"/>
    <property type="match status" value="1"/>
</dbReference>
<dbReference type="FunFam" id="3.30.230.10:FF:000003">
    <property type="entry name" value="Elongation factor G"/>
    <property type="match status" value="1"/>
</dbReference>
<dbReference type="FunFam" id="3.30.70.240:FF:000001">
    <property type="entry name" value="Elongation factor G"/>
    <property type="match status" value="1"/>
</dbReference>
<dbReference type="FunFam" id="3.30.70.870:FF:000001">
    <property type="entry name" value="Elongation factor G"/>
    <property type="match status" value="1"/>
</dbReference>
<dbReference type="FunFam" id="3.40.50.300:FF:000029">
    <property type="entry name" value="Elongation factor G"/>
    <property type="match status" value="1"/>
</dbReference>
<dbReference type="Gene3D" id="3.30.230.10">
    <property type="match status" value="1"/>
</dbReference>
<dbReference type="Gene3D" id="3.30.70.240">
    <property type="match status" value="1"/>
</dbReference>
<dbReference type="Gene3D" id="3.30.70.870">
    <property type="entry name" value="Elongation Factor G (Translational Gtpase), domain 3"/>
    <property type="match status" value="1"/>
</dbReference>
<dbReference type="Gene3D" id="3.40.50.300">
    <property type="entry name" value="P-loop containing nucleotide triphosphate hydrolases"/>
    <property type="match status" value="1"/>
</dbReference>
<dbReference type="Gene3D" id="2.40.30.10">
    <property type="entry name" value="Translation factors"/>
    <property type="match status" value="1"/>
</dbReference>
<dbReference type="HAMAP" id="MF_00054_B">
    <property type="entry name" value="EF_G_EF_2_B"/>
    <property type="match status" value="1"/>
</dbReference>
<dbReference type="InterPro" id="IPR041095">
    <property type="entry name" value="EFG_II"/>
</dbReference>
<dbReference type="InterPro" id="IPR009022">
    <property type="entry name" value="EFG_III"/>
</dbReference>
<dbReference type="InterPro" id="IPR035647">
    <property type="entry name" value="EFG_III/V"/>
</dbReference>
<dbReference type="InterPro" id="IPR047872">
    <property type="entry name" value="EFG_IV"/>
</dbReference>
<dbReference type="InterPro" id="IPR035649">
    <property type="entry name" value="EFG_V"/>
</dbReference>
<dbReference type="InterPro" id="IPR000640">
    <property type="entry name" value="EFG_V-like"/>
</dbReference>
<dbReference type="InterPro" id="IPR004161">
    <property type="entry name" value="EFTu-like_2"/>
</dbReference>
<dbReference type="InterPro" id="IPR031157">
    <property type="entry name" value="G_TR_CS"/>
</dbReference>
<dbReference type="InterPro" id="IPR027417">
    <property type="entry name" value="P-loop_NTPase"/>
</dbReference>
<dbReference type="InterPro" id="IPR020568">
    <property type="entry name" value="Ribosomal_Su5_D2-typ_SF"/>
</dbReference>
<dbReference type="InterPro" id="IPR014721">
    <property type="entry name" value="Ribsml_uS5_D2-typ_fold_subgr"/>
</dbReference>
<dbReference type="InterPro" id="IPR005225">
    <property type="entry name" value="Small_GTP-bd"/>
</dbReference>
<dbReference type="InterPro" id="IPR000795">
    <property type="entry name" value="T_Tr_GTP-bd_dom"/>
</dbReference>
<dbReference type="InterPro" id="IPR009000">
    <property type="entry name" value="Transl_B-barrel_sf"/>
</dbReference>
<dbReference type="InterPro" id="IPR004540">
    <property type="entry name" value="Transl_elong_EFG/EF2"/>
</dbReference>
<dbReference type="InterPro" id="IPR005517">
    <property type="entry name" value="Transl_elong_EFG/EF2_IV"/>
</dbReference>
<dbReference type="NCBIfam" id="TIGR00484">
    <property type="entry name" value="EF-G"/>
    <property type="match status" value="1"/>
</dbReference>
<dbReference type="NCBIfam" id="NF009381">
    <property type="entry name" value="PRK12740.1-5"/>
    <property type="match status" value="1"/>
</dbReference>
<dbReference type="NCBIfam" id="TIGR00231">
    <property type="entry name" value="small_GTP"/>
    <property type="match status" value="1"/>
</dbReference>
<dbReference type="PANTHER" id="PTHR43261:SF1">
    <property type="entry name" value="RIBOSOME-RELEASING FACTOR 2, MITOCHONDRIAL"/>
    <property type="match status" value="1"/>
</dbReference>
<dbReference type="PANTHER" id="PTHR43261">
    <property type="entry name" value="TRANSLATION ELONGATION FACTOR G-RELATED"/>
    <property type="match status" value="1"/>
</dbReference>
<dbReference type="Pfam" id="PF00679">
    <property type="entry name" value="EFG_C"/>
    <property type="match status" value="1"/>
</dbReference>
<dbReference type="Pfam" id="PF14492">
    <property type="entry name" value="EFG_III"/>
    <property type="match status" value="1"/>
</dbReference>
<dbReference type="Pfam" id="PF03764">
    <property type="entry name" value="EFG_IV"/>
    <property type="match status" value="1"/>
</dbReference>
<dbReference type="Pfam" id="PF00009">
    <property type="entry name" value="GTP_EFTU"/>
    <property type="match status" value="1"/>
</dbReference>
<dbReference type="Pfam" id="PF03144">
    <property type="entry name" value="GTP_EFTU_D2"/>
    <property type="match status" value="1"/>
</dbReference>
<dbReference type="PRINTS" id="PR00315">
    <property type="entry name" value="ELONGATNFCT"/>
</dbReference>
<dbReference type="SMART" id="SM00838">
    <property type="entry name" value="EFG_C"/>
    <property type="match status" value="1"/>
</dbReference>
<dbReference type="SMART" id="SM00889">
    <property type="entry name" value="EFG_IV"/>
    <property type="match status" value="1"/>
</dbReference>
<dbReference type="SUPFAM" id="SSF54980">
    <property type="entry name" value="EF-G C-terminal domain-like"/>
    <property type="match status" value="2"/>
</dbReference>
<dbReference type="SUPFAM" id="SSF52540">
    <property type="entry name" value="P-loop containing nucleoside triphosphate hydrolases"/>
    <property type="match status" value="1"/>
</dbReference>
<dbReference type="SUPFAM" id="SSF54211">
    <property type="entry name" value="Ribosomal protein S5 domain 2-like"/>
    <property type="match status" value="1"/>
</dbReference>
<dbReference type="SUPFAM" id="SSF50447">
    <property type="entry name" value="Translation proteins"/>
    <property type="match status" value="1"/>
</dbReference>
<dbReference type="PROSITE" id="PS00301">
    <property type="entry name" value="G_TR_1"/>
    <property type="match status" value="1"/>
</dbReference>
<dbReference type="PROSITE" id="PS51722">
    <property type="entry name" value="G_TR_2"/>
    <property type="match status" value="1"/>
</dbReference>
<proteinExistence type="inferred from homology"/>
<organism>
    <name type="scientific">Burkholderia pseudomallei (strain 1710b)</name>
    <dbReference type="NCBI Taxonomy" id="320372"/>
    <lineage>
        <taxon>Bacteria</taxon>
        <taxon>Pseudomonadati</taxon>
        <taxon>Pseudomonadota</taxon>
        <taxon>Betaproteobacteria</taxon>
        <taxon>Burkholderiales</taxon>
        <taxon>Burkholderiaceae</taxon>
        <taxon>Burkholderia</taxon>
        <taxon>pseudomallei group</taxon>
    </lineage>
</organism>
<protein>
    <recommendedName>
        <fullName evidence="1">Elongation factor G 1</fullName>
        <shortName evidence="1">EF-G 1</shortName>
    </recommendedName>
</protein>
<evidence type="ECO:0000255" key="1">
    <source>
        <dbReference type="HAMAP-Rule" id="MF_00054"/>
    </source>
</evidence>
<evidence type="ECO:0000305" key="2"/>
<reference key="1">
    <citation type="journal article" date="2010" name="Genome Biol. Evol.">
        <title>Continuing evolution of Burkholderia mallei through genome reduction and large-scale rearrangements.</title>
        <authorList>
            <person name="Losada L."/>
            <person name="Ronning C.M."/>
            <person name="DeShazer D."/>
            <person name="Woods D."/>
            <person name="Fedorova N."/>
            <person name="Kim H.S."/>
            <person name="Shabalina S.A."/>
            <person name="Pearson T.R."/>
            <person name="Brinkac L."/>
            <person name="Tan P."/>
            <person name="Nandi T."/>
            <person name="Crabtree J."/>
            <person name="Badger J."/>
            <person name="Beckstrom-Sternberg S."/>
            <person name="Saqib M."/>
            <person name="Schutzer S.E."/>
            <person name="Keim P."/>
            <person name="Nierman W.C."/>
        </authorList>
    </citation>
    <scope>NUCLEOTIDE SEQUENCE [LARGE SCALE GENOMIC DNA]</scope>
    <source>
        <strain>1710b</strain>
    </source>
</reference>
<comment type="function">
    <text evidence="1">Catalyzes the GTP-dependent ribosomal translocation step during translation elongation. During this step, the ribosome changes from the pre-translocational (PRE) to the post-translocational (POST) state as the newly formed A-site-bound peptidyl-tRNA and P-site-bound deacylated tRNA move to the P and E sites, respectively. Catalyzes the coordinated movement of the two tRNA molecules, the mRNA and conformational changes in the ribosome.</text>
</comment>
<comment type="subcellular location">
    <subcellularLocation>
        <location evidence="1">Cytoplasm</location>
    </subcellularLocation>
</comment>
<comment type="similarity">
    <text evidence="1">Belongs to the TRAFAC class translation factor GTPase superfamily. Classic translation factor GTPase family. EF-G/EF-2 subfamily.</text>
</comment>
<comment type="sequence caution" evidence="2">
    <conflict type="erroneous initiation">
        <sequence resource="EMBL-CDS" id="ABA48674"/>
    </conflict>
</comment>
<feature type="chain" id="PRO_0000225196" description="Elongation factor G 1">
    <location>
        <begin position="1"/>
        <end position="704"/>
    </location>
</feature>
<feature type="domain" description="tr-type G">
    <location>
        <begin position="8"/>
        <end position="291"/>
    </location>
</feature>
<feature type="binding site" evidence="1">
    <location>
        <begin position="17"/>
        <end position="24"/>
    </location>
    <ligand>
        <name>GTP</name>
        <dbReference type="ChEBI" id="CHEBI:37565"/>
    </ligand>
</feature>
<feature type="binding site" evidence="1">
    <location>
        <begin position="88"/>
        <end position="92"/>
    </location>
    <ligand>
        <name>GTP</name>
        <dbReference type="ChEBI" id="CHEBI:37565"/>
    </ligand>
</feature>
<feature type="binding site" evidence="1">
    <location>
        <begin position="142"/>
        <end position="145"/>
    </location>
    <ligand>
        <name>GTP</name>
        <dbReference type="ChEBI" id="CHEBI:37565"/>
    </ligand>
</feature>
<sequence length="704" mass="77822">MPRKTPIERYRNIGISAHIDAGKTTTTERILFYTGVSHKIGEVHDGAATMDWMEQEQERGITITSAATTAFWKGMAGNYPEHRINIIDTPGHVDFTIEVERSMRVLDGACMVYDSVGGVQPQSETVWRQANKYKVPRIAFVNKMDRVGADFFRVQRQIGERLKGVAVPIQIPVGAEEHFQGVVDLVKMKAIVWDDESQGVKFTYEDIPANLVELAHEWREKMVEAAAEASEELLEKYLTDHNSLTEDEIKAALRKRTIANEIVPMLCGSAFKNKGVQAMLDAVIDYLPSPADVPAILGHDLDDKEAERHPSDDEPFSALAFKIMTDPFVGQLIFFRVYSGVVESGDTLLNATKDKKERLGRILQMHANERKEIKEVRAGDIAAAVGLKEATTGDTLCDPGKPIILEKMEFPEPVISQAVEPKTKADQEKMGLALNRLAQEDPSFRVQTDEESGQTIISGMGELHLEIIVDRMKREFGVEATVGKPQVAYRETVRTVAEDVEGKFVKQSGGRGQYGHAVIKLEPNPGKGYEFLDEIKGGVIPREFIPAVNKGIEETLKSGVLAGYPVVDVKVHLTFGSYHDVDSNENAFRMAGSMAFKEAMRRAKPVLLEPMMAVEVETPEDFMGNVMGDLSSRRGIVQGMEDIAGGGGKLVRAEVPLAEMFGYSTSLRSATQGRATYTMEFKHYAETPSNVSEAVINAKQIGRG</sequence>
<accession>Q3JV86</accession>
<keyword id="KW-0963">Cytoplasm</keyword>
<keyword id="KW-0251">Elongation factor</keyword>
<keyword id="KW-0342">GTP-binding</keyword>
<keyword id="KW-0547">Nucleotide-binding</keyword>
<keyword id="KW-0648">Protein biosynthesis</keyword>